<protein>
    <recommendedName>
        <fullName>Probable ATP-dependent RNA helicase DDX4</fullName>
        <ecNumber evidence="1">3.6.4.13</ecNumber>
    </recommendedName>
    <alternativeName>
        <fullName>DEAD box protein 4</fullName>
    </alternativeName>
</protein>
<organism>
    <name type="scientific">Bos taurus</name>
    <name type="common">Bovine</name>
    <dbReference type="NCBI Taxonomy" id="9913"/>
    <lineage>
        <taxon>Eukaryota</taxon>
        <taxon>Metazoa</taxon>
        <taxon>Chordata</taxon>
        <taxon>Craniata</taxon>
        <taxon>Vertebrata</taxon>
        <taxon>Euteleostomi</taxon>
        <taxon>Mammalia</taxon>
        <taxon>Eutheria</taxon>
        <taxon>Laurasiatheria</taxon>
        <taxon>Artiodactyla</taxon>
        <taxon>Ruminantia</taxon>
        <taxon>Pecora</taxon>
        <taxon>Bovidae</taxon>
        <taxon>Bovinae</taxon>
        <taxon>Bos</taxon>
    </lineage>
</organism>
<name>DDX4_BOVIN</name>
<feature type="chain" id="PRO_0000244562" description="Probable ATP-dependent RNA helicase DDX4">
    <location>
        <begin position="1"/>
        <end position="729"/>
    </location>
</feature>
<feature type="domain" description="Helicase ATP-binding" evidence="4">
    <location>
        <begin position="321"/>
        <end position="504"/>
    </location>
</feature>
<feature type="domain" description="Helicase C-terminal" evidence="5">
    <location>
        <begin position="532"/>
        <end position="677"/>
    </location>
</feature>
<feature type="region of interest" description="Disordered" evidence="6">
    <location>
        <begin position="22"/>
        <end position="246"/>
    </location>
</feature>
<feature type="region of interest" description="Interaction with RANBP9" evidence="3">
    <location>
        <begin position="230"/>
        <end position="249"/>
    </location>
</feature>
<feature type="region of interest" description="Disordered" evidence="6">
    <location>
        <begin position="706"/>
        <end position="729"/>
    </location>
</feature>
<feature type="short sequence motif" description="Q motif">
    <location>
        <begin position="290"/>
        <end position="318"/>
    </location>
</feature>
<feature type="short sequence motif" description="DEAD box" evidence="1">
    <location>
        <begin position="448"/>
        <end position="451"/>
    </location>
</feature>
<feature type="compositionally biased region" description="Polar residues" evidence="6">
    <location>
        <begin position="29"/>
        <end position="45"/>
    </location>
</feature>
<feature type="compositionally biased region" description="Basic and acidic residues" evidence="6">
    <location>
        <begin position="71"/>
        <end position="80"/>
    </location>
</feature>
<feature type="compositionally biased region" description="Gly residues" evidence="6">
    <location>
        <begin position="152"/>
        <end position="164"/>
    </location>
</feature>
<feature type="compositionally biased region" description="Gly residues" evidence="6">
    <location>
        <begin position="204"/>
        <end position="214"/>
    </location>
</feature>
<feature type="compositionally biased region" description="Polar residues" evidence="6">
    <location>
        <begin position="706"/>
        <end position="720"/>
    </location>
</feature>
<feature type="binding site" evidence="4">
    <location>
        <begin position="334"/>
        <end position="341"/>
    </location>
    <ligand>
        <name>ATP</name>
        <dbReference type="ChEBI" id="CHEBI:30616"/>
    </ligand>
</feature>
<feature type="modified residue" description="Phosphoserine" evidence="2">
    <location>
        <position position="224"/>
    </location>
</feature>
<feature type="modified residue" description="Phosphoserine" evidence="1">
    <location>
        <position position="228"/>
    </location>
</feature>
<feature type="modified residue" description="Phosphoserine" evidence="1">
    <location>
        <position position="727"/>
    </location>
</feature>
<sequence length="729" mass="79443">MGDEDWEAEIIKPHISSYVPVFEKDRYSSGANGDTFNRTPASSSEMGDGSSRRDHFMRSGFASGRSLGNRDPGESNKRENTSTVGGFGVGKSFGNRGFSNNKFEEGDSSGFWRESSIDCEDNQTRNRGFSKRGGYQDGNDSEALGSSRRGGRGSFRGCRGGFGRGSPNSDYEQDEGTQRSGGIFGSRRSALSGAGNGDTFQSRSGGGSGRGGYKGLNEEVITGSGKNSWKSEAEGGESGDTQGPKVTYIPPPPPEDEDSIFAHYQTGINFDKYDTILVEVSGHDPPPAILTFEEANLCQTLNNNIAKAGYTKLTPVQKYSIPIIQGGRDLMACAQTGSGKTAAFLLPILAHMMRDGITASRFKELQEPECIIVAPTRELINQIYLEARKFSFGTCVRAVVIYGGTQLGHSIRQIVQGCNILCATPGRLMDVIGKEKIGLRQVKYLVLDEADRMLDMGFGPEMKKLISCPGMPSKEQRQTLMFSATFPEEIQRLAGEFLKSNYLFVAVGQVGGACRDVQQTILQVGQYSKREKLVEILRNIGDERTMVFVETKKKADFIATFLCQEKISTTSIHGDREQREREQALGDFRCGKCPVLVATSVAARGLDIENVQHVINFDLPSTIDEYVHRIGRTGRCGNTGRAISFFDLESDSQLAQPLVKVLSDAQQDVPAWLEEIAFSTYGPGFSGNARGNVFASVDTRKNYPGKSSLNTAGFSSTQAPNPVDDESWD</sequence>
<dbReference type="EC" id="3.6.4.13" evidence="1"/>
<dbReference type="EMBL" id="AF541971">
    <property type="protein sequence ID" value="AAQ11373.1"/>
    <property type="molecule type" value="mRNA"/>
</dbReference>
<dbReference type="RefSeq" id="NP_001007820.1">
    <property type="nucleotide sequence ID" value="NM_001007819.1"/>
</dbReference>
<dbReference type="SMR" id="Q5W5U4"/>
<dbReference type="FunCoup" id="Q5W5U4">
    <property type="interactions" value="82"/>
</dbReference>
<dbReference type="STRING" id="9913.ENSBTAP00000011682"/>
<dbReference type="PaxDb" id="9913-ENSBTAP00000011682"/>
<dbReference type="GeneID" id="493725"/>
<dbReference type="KEGG" id="bta:493725"/>
<dbReference type="CTD" id="54514"/>
<dbReference type="eggNOG" id="KOG0335">
    <property type="taxonomic scope" value="Eukaryota"/>
</dbReference>
<dbReference type="InParanoid" id="Q5W5U4"/>
<dbReference type="OrthoDB" id="196131at2759"/>
<dbReference type="Proteomes" id="UP000009136">
    <property type="component" value="Unplaced"/>
</dbReference>
<dbReference type="GO" id="GO:0033391">
    <property type="term" value="C:chromatoid body"/>
    <property type="evidence" value="ECO:0000314"/>
    <property type="project" value="MGI"/>
</dbReference>
<dbReference type="GO" id="GO:0005737">
    <property type="term" value="C:cytoplasm"/>
    <property type="evidence" value="ECO:0000250"/>
    <property type="project" value="UniProtKB"/>
</dbReference>
<dbReference type="GO" id="GO:0005634">
    <property type="term" value="C:nucleus"/>
    <property type="evidence" value="ECO:0000318"/>
    <property type="project" value="GO_Central"/>
</dbReference>
<dbReference type="GO" id="GO:0043186">
    <property type="term" value="C:P granule"/>
    <property type="evidence" value="ECO:0000318"/>
    <property type="project" value="GO_Central"/>
</dbReference>
<dbReference type="GO" id="GO:0048471">
    <property type="term" value="C:perinuclear region of cytoplasm"/>
    <property type="evidence" value="ECO:0007669"/>
    <property type="project" value="UniProtKB-SubCell"/>
</dbReference>
<dbReference type="GO" id="GO:0071546">
    <property type="term" value="C:pi-body"/>
    <property type="evidence" value="ECO:0000250"/>
    <property type="project" value="UniProtKB"/>
</dbReference>
<dbReference type="GO" id="GO:0071547">
    <property type="term" value="C:piP-body"/>
    <property type="evidence" value="ECO:0000250"/>
    <property type="project" value="UniProtKB"/>
</dbReference>
<dbReference type="GO" id="GO:0005524">
    <property type="term" value="F:ATP binding"/>
    <property type="evidence" value="ECO:0007669"/>
    <property type="project" value="UniProtKB-KW"/>
</dbReference>
<dbReference type="GO" id="GO:0016887">
    <property type="term" value="F:ATP hydrolysis activity"/>
    <property type="evidence" value="ECO:0000250"/>
    <property type="project" value="UniProtKB"/>
</dbReference>
<dbReference type="GO" id="GO:0003729">
    <property type="term" value="F:mRNA binding"/>
    <property type="evidence" value="ECO:0000318"/>
    <property type="project" value="GO_Central"/>
</dbReference>
<dbReference type="GO" id="GO:0003724">
    <property type="term" value="F:RNA helicase activity"/>
    <property type="evidence" value="ECO:0000318"/>
    <property type="project" value="GO_Central"/>
</dbReference>
<dbReference type="GO" id="GO:0030154">
    <property type="term" value="P:cell differentiation"/>
    <property type="evidence" value="ECO:0000318"/>
    <property type="project" value="GO_Central"/>
</dbReference>
<dbReference type="GO" id="GO:0007276">
    <property type="term" value="P:gamete generation"/>
    <property type="evidence" value="ECO:0000318"/>
    <property type="project" value="GO_Central"/>
</dbReference>
<dbReference type="GO" id="GO:0007281">
    <property type="term" value="P:germ cell development"/>
    <property type="evidence" value="ECO:0000318"/>
    <property type="project" value="GO_Central"/>
</dbReference>
<dbReference type="GO" id="GO:0007141">
    <property type="term" value="P:male meiosis I"/>
    <property type="evidence" value="ECO:0000250"/>
    <property type="project" value="UniProtKB"/>
</dbReference>
<dbReference type="GO" id="GO:0007140">
    <property type="term" value="P:male meiotic nuclear division"/>
    <property type="evidence" value="ECO:0000250"/>
    <property type="project" value="UniProtKB"/>
</dbReference>
<dbReference type="GO" id="GO:0034587">
    <property type="term" value="P:piRNA processing"/>
    <property type="evidence" value="ECO:0000250"/>
    <property type="project" value="UniProtKB"/>
</dbReference>
<dbReference type="GO" id="GO:0007283">
    <property type="term" value="P:spermatogenesis"/>
    <property type="evidence" value="ECO:0000250"/>
    <property type="project" value="UniProtKB"/>
</dbReference>
<dbReference type="GO" id="GO:0141196">
    <property type="term" value="P:transposable element silencing by piRNA-mediated DNA methylation"/>
    <property type="evidence" value="ECO:0000250"/>
    <property type="project" value="UniProtKB"/>
</dbReference>
<dbReference type="GO" id="GO:0141006">
    <property type="term" value="P:transposable element silencing by piRNA-mediated heterochromatin formation"/>
    <property type="evidence" value="ECO:0000250"/>
    <property type="project" value="UniProtKB"/>
</dbReference>
<dbReference type="CDD" id="cd18052">
    <property type="entry name" value="DEADc_DDX4"/>
    <property type="match status" value="1"/>
</dbReference>
<dbReference type="CDD" id="cd18787">
    <property type="entry name" value="SF2_C_DEAD"/>
    <property type="match status" value="1"/>
</dbReference>
<dbReference type="FunFam" id="3.40.50.300:FF:000008">
    <property type="entry name" value="ATP-dependent RNA helicase RhlB"/>
    <property type="match status" value="1"/>
</dbReference>
<dbReference type="FunFam" id="3.40.50.300:FF:000397">
    <property type="entry name" value="Probable ATP-dependent RNA helicase DDX4"/>
    <property type="match status" value="1"/>
</dbReference>
<dbReference type="Gene3D" id="3.40.50.300">
    <property type="entry name" value="P-loop containing nucleotide triphosphate hydrolases"/>
    <property type="match status" value="2"/>
</dbReference>
<dbReference type="InterPro" id="IPR011545">
    <property type="entry name" value="DEAD/DEAH_box_helicase_dom"/>
</dbReference>
<dbReference type="InterPro" id="IPR014001">
    <property type="entry name" value="Helicase_ATP-bd"/>
</dbReference>
<dbReference type="InterPro" id="IPR001650">
    <property type="entry name" value="Helicase_C-like"/>
</dbReference>
<dbReference type="InterPro" id="IPR027417">
    <property type="entry name" value="P-loop_NTPase"/>
</dbReference>
<dbReference type="InterPro" id="IPR000629">
    <property type="entry name" value="RNA-helicase_DEAD-box_CS"/>
</dbReference>
<dbReference type="InterPro" id="IPR014014">
    <property type="entry name" value="RNA_helicase_DEAD_Q_motif"/>
</dbReference>
<dbReference type="PANTHER" id="PTHR47958">
    <property type="entry name" value="ATP-DEPENDENT RNA HELICASE DBP3"/>
    <property type="match status" value="1"/>
</dbReference>
<dbReference type="Pfam" id="PF00270">
    <property type="entry name" value="DEAD"/>
    <property type="match status" value="1"/>
</dbReference>
<dbReference type="Pfam" id="PF00271">
    <property type="entry name" value="Helicase_C"/>
    <property type="match status" value="1"/>
</dbReference>
<dbReference type="SMART" id="SM00487">
    <property type="entry name" value="DEXDc"/>
    <property type="match status" value="1"/>
</dbReference>
<dbReference type="SMART" id="SM00490">
    <property type="entry name" value="HELICc"/>
    <property type="match status" value="1"/>
</dbReference>
<dbReference type="SUPFAM" id="SSF52540">
    <property type="entry name" value="P-loop containing nucleoside triphosphate hydrolases"/>
    <property type="match status" value="2"/>
</dbReference>
<dbReference type="PROSITE" id="PS00039">
    <property type="entry name" value="DEAD_ATP_HELICASE"/>
    <property type="match status" value="1"/>
</dbReference>
<dbReference type="PROSITE" id="PS51192">
    <property type="entry name" value="HELICASE_ATP_BIND_1"/>
    <property type="match status" value="1"/>
</dbReference>
<dbReference type="PROSITE" id="PS51194">
    <property type="entry name" value="HELICASE_CTER"/>
    <property type="match status" value="1"/>
</dbReference>
<dbReference type="PROSITE" id="PS51195">
    <property type="entry name" value="Q_MOTIF"/>
    <property type="match status" value="1"/>
</dbReference>
<comment type="function">
    <text evidence="1">ATP-dependent RNA helicase required during spermatogenesis to repress transposable elements and preventing their mobilization, which is essential for the germline integrity. Acts via the piRNA metabolic process, which mediates the repression of transposable elements during meiosis by forming complexes composed of piRNAs and Piwi proteins and governs the methylation and subsequent repression of transposons. Involved in the secondary piRNAs metabolic process, the production of piRNAs in fetal male germ cells through a ping-pong amplification cycle. Required for PIWIL2 slicing-triggered piRNA biogenesis: helicase activity enables utilization of one of the slice cleavage fragments generated by PIWIL2 and processing these pre-piRNAs into piRNAs.</text>
</comment>
<comment type="catalytic activity">
    <reaction evidence="1">
        <text>ATP + H2O = ADP + phosphate + H(+)</text>
        <dbReference type="Rhea" id="RHEA:13065"/>
        <dbReference type="ChEBI" id="CHEBI:15377"/>
        <dbReference type="ChEBI" id="CHEBI:15378"/>
        <dbReference type="ChEBI" id="CHEBI:30616"/>
        <dbReference type="ChEBI" id="CHEBI:43474"/>
        <dbReference type="ChEBI" id="CHEBI:456216"/>
        <dbReference type="EC" id="3.6.4.13"/>
    </reaction>
</comment>
<comment type="subunit">
    <text evidence="1">Found in a mRNP complex, at least composed of TDRD1, TDRD6, TDRD7 and DDX4. Interacts with RANBP9. Interacts with RANBP10. Interacts with PIWIL2 and MAEL. Interacts with BMAL1 and CLOCK. Interacts with Tex19.1 and, probably, Tex19.2. Interacts with RBM46.</text>
</comment>
<comment type="subcellular location">
    <subcellularLocation>
        <location evidence="1">Cytoplasm</location>
    </subcellularLocation>
    <subcellularLocation>
        <location evidence="1">Cytoplasm</location>
        <location evidence="1">Perinuclear region</location>
    </subcellularLocation>
    <text evidence="1">Component of the meiotic nuage, also named P granule, a germ-cell-specific organelle required to repress transposon activity during meiosis.</text>
</comment>
<comment type="similarity">
    <text evidence="7">Belongs to the DEAD box helicase family. DDX4/VASA subfamily.</text>
</comment>
<evidence type="ECO:0000250" key="1">
    <source>
        <dbReference type="UniProtKB" id="Q61496"/>
    </source>
</evidence>
<evidence type="ECO:0000250" key="2">
    <source>
        <dbReference type="UniProtKB" id="Q64060"/>
    </source>
</evidence>
<evidence type="ECO:0000250" key="3">
    <source>
        <dbReference type="UniProtKB" id="Q9NQI0"/>
    </source>
</evidence>
<evidence type="ECO:0000255" key="4">
    <source>
        <dbReference type="PROSITE-ProRule" id="PRU00541"/>
    </source>
</evidence>
<evidence type="ECO:0000255" key="5">
    <source>
        <dbReference type="PROSITE-ProRule" id="PRU00542"/>
    </source>
</evidence>
<evidence type="ECO:0000256" key="6">
    <source>
        <dbReference type="SAM" id="MobiDB-lite"/>
    </source>
</evidence>
<evidence type="ECO:0000305" key="7"/>
<proteinExistence type="evidence at transcript level"/>
<reference key="1">
    <citation type="submission" date="2002-08" db="EMBL/GenBank/DDBJ databases">
        <authorList>
            <person name="Bartholomew R.A."/>
            <person name="Parks J.E."/>
        </authorList>
    </citation>
    <scope>NUCLEOTIDE SEQUENCE [MRNA]</scope>
    <source>
        <tissue>Testis</tissue>
    </source>
</reference>
<accession>Q5W5U4</accession>
<gene>
    <name type="primary">DDX4</name>
</gene>
<keyword id="KW-0067">ATP-binding</keyword>
<keyword id="KW-0963">Cytoplasm</keyword>
<keyword id="KW-0217">Developmental protein</keyword>
<keyword id="KW-0221">Differentiation</keyword>
<keyword id="KW-0347">Helicase</keyword>
<keyword id="KW-0378">Hydrolase</keyword>
<keyword id="KW-0469">Meiosis</keyword>
<keyword id="KW-0547">Nucleotide-binding</keyword>
<keyword id="KW-0597">Phosphoprotein</keyword>
<keyword id="KW-1185">Reference proteome</keyword>
<keyword id="KW-0677">Repeat</keyword>
<keyword id="KW-0943">RNA-mediated gene silencing</keyword>
<keyword id="KW-0744">Spermatogenesis</keyword>